<gene>
    <name evidence="1" type="primary">rpl10</name>
    <name evidence="1" type="synonym">rplP0</name>
    <name type="ordered locus">YG5714_1879</name>
</gene>
<accession>C3N7E1</accession>
<protein>
    <recommendedName>
        <fullName evidence="1">Large ribosomal subunit protein uL10</fullName>
    </recommendedName>
    <alternativeName>
        <fullName evidence="3">50S ribosomal protein L10</fullName>
    </alternativeName>
    <alternativeName>
        <fullName evidence="1">Acidic ribosomal protein P0 homolog</fullName>
    </alternativeName>
</protein>
<dbReference type="EMBL" id="CP001403">
    <property type="protein sequence ID" value="ACP46135.1"/>
    <property type="molecule type" value="Genomic_DNA"/>
</dbReference>
<dbReference type="RefSeq" id="WP_012713970.1">
    <property type="nucleotide sequence ID" value="NC_012622.1"/>
</dbReference>
<dbReference type="SMR" id="C3N7E1"/>
<dbReference type="KEGG" id="siy:YG5714_1879"/>
<dbReference type="HOGENOM" id="CLU_053173_0_0_2"/>
<dbReference type="Proteomes" id="UP000002308">
    <property type="component" value="Chromosome"/>
</dbReference>
<dbReference type="GO" id="GO:0022625">
    <property type="term" value="C:cytosolic large ribosomal subunit"/>
    <property type="evidence" value="ECO:0007669"/>
    <property type="project" value="TreeGrafter"/>
</dbReference>
<dbReference type="GO" id="GO:0070180">
    <property type="term" value="F:large ribosomal subunit rRNA binding"/>
    <property type="evidence" value="ECO:0007669"/>
    <property type="project" value="UniProtKB-UniRule"/>
</dbReference>
<dbReference type="GO" id="GO:0003735">
    <property type="term" value="F:structural constituent of ribosome"/>
    <property type="evidence" value="ECO:0007669"/>
    <property type="project" value="TreeGrafter"/>
</dbReference>
<dbReference type="GO" id="GO:0002181">
    <property type="term" value="P:cytoplasmic translation"/>
    <property type="evidence" value="ECO:0007669"/>
    <property type="project" value="TreeGrafter"/>
</dbReference>
<dbReference type="GO" id="GO:0000027">
    <property type="term" value="P:ribosomal large subunit assembly"/>
    <property type="evidence" value="ECO:0007669"/>
    <property type="project" value="TreeGrafter"/>
</dbReference>
<dbReference type="CDD" id="cd05795">
    <property type="entry name" value="Ribosomal_P0_L10e"/>
    <property type="match status" value="1"/>
</dbReference>
<dbReference type="FunFam" id="3.90.105.20:FF:000001">
    <property type="entry name" value="60S acidic ribosomal protein P0"/>
    <property type="match status" value="1"/>
</dbReference>
<dbReference type="Gene3D" id="3.30.70.1730">
    <property type="match status" value="1"/>
</dbReference>
<dbReference type="Gene3D" id="3.90.105.20">
    <property type="match status" value="1"/>
</dbReference>
<dbReference type="Gene3D" id="6.10.140.760">
    <property type="match status" value="1"/>
</dbReference>
<dbReference type="HAMAP" id="MF_00280">
    <property type="entry name" value="Ribosomal_uL10_arch"/>
    <property type="match status" value="1"/>
</dbReference>
<dbReference type="InterPro" id="IPR050323">
    <property type="entry name" value="Ribosomal_protein_uL10"/>
</dbReference>
<dbReference type="InterPro" id="IPR001790">
    <property type="entry name" value="Ribosomal_uL10"/>
</dbReference>
<dbReference type="InterPro" id="IPR040637">
    <property type="entry name" value="Ribosomal_uL10-like_insert"/>
</dbReference>
<dbReference type="InterPro" id="IPR043164">
    <property type="entry name" value="Ribosomal_uL10-like_insert_sf"/>
</dbReference>
<dbReference type="InterPro" id="IPR043141">
    <property type="entry name" value="Ribosomal_uL10-like_sf"/>
</dbReference>
<dbReference type="InterPro" id="IPR022909">
    <property type="entry name" value="Ribosomal_uL10_arc"/>
</dbReference>
<dbReference type="NCBIfam" id="NF003095">
    <property type="entry name" value="PRK04019.1-1"/>
    <property type="match status" value="1"/>
</dbReference>
<dbReference type="PANTHER" id="PTHR45699">
    <property type="entry name" value="60S ACIDIC RIBOSOMAL PROTEIN P0"/>
    <property type="match status" value="1"/>
</dbReference>
<dbReference type="PANTHER" id="PTHR45699:SF3">
    <property type="entry name" value="LARGE RIBOSOMAL SUBUNIT PROTEIN UL10"/>
    <property type="match status" value="1"/>
</dbReference>
<dbReference type="Pfam" id="PF00466">
    <property type="entry name" value="Ribosomal_L10"/>
    <property type="match status" value="1"/>
</dbReference>
<dbReference type="Pfam" id="PF17777">
    <property type="entry name" value="RL10P_insert"/>
    <property type="match status" value="1"/>
</dbReference>
<dbReference type="SUPFAM" id="SSF160369">
    <property type="entry name" value="Ribosomal protein L10-like"/>
    <property type="match status" value="1"/>
</dbReference>
<evidence type="ECO:0000255" key="1">
    <source>
        <dbReference type="HAMAP-Rule" id="MF_00280"/>
    </source>
</evidence>
<evidence type="ECO:0000256" key="2">
    <source>
        <dbReference type="SAM" id="MobiDB-lite"/>
    </source>
</evidence>
<evidence type="ECO:0000305" key="3"/>
<proteinExistence type="inferred from homology"/>
<name>RL10_SACI7</name>
<sequence>MKRLALALKQKKVASWKLEEVKELTELIKNSNTILIGSLEGFPADKLHEIRKKLRGKAIIKVTKNTLFKIAAKNAGISTEKLEQYLTGPNVFIFTKDNPFLTNMFFENYKLRRYAMPGDKAEEEVIIPAGDTGMPAGPILSVFGKLKVQTKVQDGKVHVVKDTVVAKPGDVIPTEALPILQKLGIMPVYVKLKIKVAYHEGLVIPAENLKLNLEGYRSNIAEAYRNAFTLAVEIAYPVPDVLKFTINKIFKNAITLASEIGYLTPESAQAVISKAVAKAYALATAISGKVDLGVKLPSAQQTQTQQSTAEEKKEEKKEEEKKGPSEEEIGSGLASLFG</sequence>
<organism>
    <name type="scientific">Saccharolobus islandicus (strain Y.G.57.14 / Yellowstone #1)</name>
    <name type="common">Sulfolobus islandicus</name>
    <dbReference type="NCBI Taxonomy" id="439386"/>
    <lineage>
        <taxon>Archaea</taxon>
        <taxon>Thermoproteota</taxon>
        <taxon>Thermoprotei</taxon>
        <taxon>Sulfolobales</taxon>
        <taxon>Sulfolobaceae</taxon>
        <taxon>Saccharolobus</taxon>
    </lineage>
</organism>
<comment type="function">
    <text evidence="1">Forms part of the ribosomal stalk, playing a central role in the interaction of the ribosome with GTP-bound translation factors.</text>
</comment>
<comment type="subunit">
    <text evidence="1">Part of the 50S ribosomal subunit. Forms part of the ribosomal stalk which helps the ribosome interact with GTP-bound translation factors. Forms a heptameric L10(L12)2(L12)2(L12)2 complex, where L10 forms an elongated spine to which the L12 dimers bind in a sequential fashion.</text>
</comment>
<comment type="similarity">
    <text evidence="1">Belongs to the universal ribosomal protein uL10 family.</text>
</comment>
<reference key="1">
    <citation type="journal article" date="2009" name="Proc. Natl. Acad. Sci. U.S.A.">
        <title>Biogeography of the Sulfolobus islandicus pan-genome.</title>
        <authorList>
            <person name="Reno M.L."/>
            <person name="Held N.L."/>
            <person name="Fields C.J."/>
            <person name="Burke P.V."/>
            <person name="Whitaker R.J."/>
        </authorList>
    </citation>
    <scope>NUCLEOTIDE SEQUENCE [LARGE SCALE GENOMIC DNA]</scope>
    <source>
        <strain>Y.G.57.14 / Yellowstone #1</strain>
    </source>
</reference>
<keyword id="KW-0687">Ribonucleoprotein</keyword>
<keyword id="KW-0689">Ribosomal protein</keyword>
<keyword id="KW-0694">RNA-binding</keyword>
<keyword id="KW-0699">rRNA-binding</keyword>
<feature type="chain" id="PRO_1000204817" description="Large ribosomal subunit protein uL10">
    <location>
        <begin position="1"/>
        <end position="338"/>
    </location>
</feature>
<feature type="region of interest" description="Disordered" evidence="2">
    <location>
        <begin position="297"/>
        <end position="338"/>
    </location>
</feature>
<feature type="compositionally biased region" description="Low complexity" evidence="2">
    <location>
        <begin position="298"/>
        <end position="308"/>
    </location>
</feature>
<feature type="compositionally biased region" description="Basic and acidic residues" evidence="2">
    <location>
        <begin position="309"/>
        <end position="325"/>
    </location>
</feature>